<dbReference type="EC" id="1.1.1.95" evidence="3"/>
<dbReference type="EC" id="1.1.1.399" evidence="3"/>
<dbReference type="EC" id="1.1.1.37" evidence="3"/>
<dbReference type="EMBL" id="AB222169">
    <property type="protein sequence ID" value="BAF62414.1"/>
    <property type="molecule type" value="mRNA"/>
</dbReference>
<dbReference type="RefSeq" id="NP_001092041.1">
    <property type="nucleotide sequence ID" value="NM_001098571.1"/>
</dbReference>
<dbReference type="SMR" id="A5A6P1"/>
<dbReference type="STRING" id="9598.ENSPTRP00000002013"/>
<dbReference type="PaxDb" id="9598-ENSPTRP00000002013"/>
<dbReference type="GeneID" id="739534"/>
<dbReference type="KEGG" id="ptr:739534"/>
<dbReference type="CTD" id="26227"/>
<dbReference type="eggNOG" id="KOG0068">
    <property type="taxonomic scope" value="Eukaryota"/>
</dbReference>
<dbReference type="InParanoid" id="A5A6P1"/>
<dbReference type="UniPathway" id="UPA00135">
    <property type="reaction ID" value="UER00196"/>
</dbReference>
<dbReference type="Proteomes" id="UP000002277">
    <property type="component" value="Unplaced"/>
</dbReference>
<dbReference type="GO" id="GO:0030060">
    <property type="term" value="F:L-malate dehydrogenase (NAD+) activity"/>
    <property type="evidence" value="ECO:0007669"/>
    <property type="project" value="UniProtKB-EC"/>
</dbReference>
<dbReference type="GO" id="GO:0051287">
    <property type="term" value="F:NAD binding"/>
    <property type="evidence" value="ECO:0007669"/>
    <property type="project" value="InterPro"/>
</dbReference>
<dbReference type="GO" id="GO:0004617">
    <property type="term" value="F:phosphoglycerate dehydrogenase activity"/>
    <property type="evidence" value="ECO:0000318"/>
    <property type="project" value="GO_Central"/>
</dbReference>
<dbReference type="GO" id="GO:0006564">
    <property type="term" value="P:L-serine biosynthetic process"/>
    <property type="evidence" value="ECO:0007669"/>
    <property type="project" value="UniProtKB-KW"/>
</dbReference>
<dbReference type="CDD" id="cd12173">
    <property type="entry name" value="PGDH_4"/>
    <property type="match status" value="1"/>
</dbReference>
<dbReference type="FunFam" id="3.30.1330.90:FF:000005">
    <property type="entry name" value="D-3-phosphoglycerate dehydrogenase"/>
    <property type="match status" value="1"/>
</dbReference>
<dbReference type="FunFam" id="3.40.50.720:FF:000021">
    <property type="entry name" value="D-3-phosphoglycerate dehydrogenase"/>
    <property type="match status" value="1"/>
</dbReference>
<dbReference type="FunFam" id="3.40.50.720:FF:000616">
    <property type="entry name" value="D-3-phosphoglycerate dehydrogenase 2 chloroplastic"/>
    <property type="match status" value="1"/>
</dbReference>
<dbReference type="Gene3D" id="3.30.1330.90">
    <property type="entry name" value="D-3-phosphoglycerate dehydrogenase, domain 3"/>
    <property type="match status" value="1"/>
</dbReference>
<dbReference type="Gene3D" id="3.40.50.720">
    <property type="entry name" value="NAD(P)-binding Rossmann-like Domain"/>
    <property type="match status" value="2"/>
</dbReference>
<dbReference type="InterPro" id="IPR029009">
    <property type="entry name" value="ASB_dom_sf"/>
</dbReference>
<dbReference type="InterPro" id="IPR006139">
    <property type="entry name" value="D-isomer_2_OHA_DH_cat_dom"/>
</dbReference>
<dbReference type="InterPro" id="IPR029753">
    <property type="entry name" value="D-isomer_DH_CS"/>
</dbReference>
<dbReference type="InterPro" id="IPR029752">
    <property type="entry name" value="D-isomer_DH_CS1"/>
</dbReference>
<dbReference type="InterPro" id="IPR006140">
    <property type="entry name" value="D-isomer_DH_NAD-bd"/>
</dbReference>
<dbReference type="InterPro" id="IPR036291">
    <property type="entry name" value="NAD(P)-bd_dom_sf"/>
</dbReference>
<dbReference type="InterPro" id="IPR006236">
    <property type="entry name" value="PGDH"/>
</dbReference>
<dbReference type="InterPro" id="IPR045626">
    <property type="entry name" value="PGDH_ASB_dom"/>
</dbReference>
<dbReference type="NCBIfam" id="TIGR01327">
    <property type="entry name" value="PGDH"/>
    <property type="match status" value="1"/>
</dbReference>
<dbReference type="PANTHER" id="PTHR42938:SF22">
    <property type="entry name" value="D-3-PHOSPHOGLYCERATE DEHYDROGENASE"/>
    <property type="match status" value="1"/>
</dbReference>
<dbReference type="PANTHER" id="PTHR42938">
    <property type="entry name" value="FORMATE DEHYDROGENASE 1"/>
    <property type="match status" value="1"/>
</dbReference>
<dbReference type="Pfam" id="PF00389">
    <property type="entry name" value="2-Hacid_dh"/>
    <property type="match status" value="1"/>
</dbReference>
<dbReference type="Pfam" id="PF02826">
    <property type="entry name" value="2-Hacid_dh_C"/>
    <property type="match status" value="1"/>
</dbReference>
<dbReference type="Pfam" id="PF19304">
    <property type="entry name" value="PGDH_inter"/>
    <property type="match status" value="1"/>
</dbReference>
<dbReference type="SUPFAM" id="SSF52283">
    <property type="entry name" value="Formate/glycerate dehydrogenase catalytic domain-like"/>
    <property type="match status" value="1"/>
</dbReference>
<dbReference type="SUPFAM" id="SSF51735">
    <property type="entry name" value="NAD(P)-binding Rossmann-fold domains"/>
    <property type="match status" value="1"/>
</dbReference>
<dbReference type="SUPFAM" id="SSF143548">
    <property type="entry name" value="Serine metabolism enzymes domain"/>
    <property type="match status" value="1"/>
</dbReference>
<dbReference type="PROSITE" id="PS00306">
    <property type="entry name" value="CASEIN_ALPHA_BETA"/>
    <property type="match status" value="1"/>
</dbReference>
<dbReference type="PROSITE" id="PS00065">
    <property type="entry name" value="D_2_HYDROXYACID_DH_1"/>
    <property type="match status" value="1"/>
</dbReference>
<dbReference type="PROSITE" id="PS00670">
    <property type="entry name" value="D_2_HYDROXYACID_DH_2"/>
    <property type="match status" value="1"/>
</dbReference>
<dbReference type="PROSITE" id="PS00671">
    <property type="entry name" value="D_2_HYDROXYACID_DH_3"/>
    <property type="match status" value="1"/>
</dbReference>
<organism>
    <name type="scientific">Pan troglodytes</name>
    <name type="common">Chimpanzee</name>
    <dbReference type="NCBI Taxonomy" id="9598"/>
    <lineage>
        <taxon>Eukaryota</taxon>
        <taxon>Metazoa</taxon>
        <taxon>Chordata</taxon>
        <taxon>Craniata</taxon>
        <taxon>Vertebrata</taxon>
        <taxon>Euteleostomi</taxon>
        <taxon>Mammalia</taxon>
        <taxon>Eutheria</taxon>
        <taxon>Euarchontoglires</taxon>
        <taxon>Primates</taxon>
        <taxon>Haplorrhini</taxon>
        <taxon>Catarrhini</taxon>
        <taxon>Hominidae</taxon>
        <taxon>Pan</taxon>
    </lineage>
</organism>
<accession>A5A6P1</accession>
<comment type="function">
    <text evidence="3">Catalyzes the reversible oxidation of 3-phospho-D-glycerate to 3-phosphonooxypyruvate, the first step of the phosphorylated L-serine biosynthesis pathway. Also catalyzes the reversible oxidation of 2-hydroxyglutarate to 2-oxoglutarate and the reversible oxidation of (S)-malate to oxaloacetate.</text>
</comment>
<comment type="catalytic activity">
    <reaction evidence="3">
        <text>(2R)-3-phosphoglycerate + NAD(+) = 3-phosphooxypyruvate + NADH + H(+)</text>
        <dbReference type="Rhea" id="RHEA:12641"/>
        <dbReference type="ChEBI" id="CHEBI:15378"/>
        <dbReference type="ChEBI" id="CHEBI:18110"/>
        <dbReference type="ChEBI" id="CHEBI:57540"/>
        <dbReference type="ChEBI" id="CHEBI:57945"/>
        <dbReference type="ChEBI" id="CHEBI:58272"/>
        <dbReference type="EC" id="1.1.1.95"/>
    </reaction>
</comment>
<comment type="catalytic activity">
    <reaction evidence="3">
        <text>(R)-2-hydroxyglutarate + NAD(+) = 2-oxoglutarate + NADH + H(+)</text>
        <dbReference type="Rhea" id="RHEA:49612"/>
        <dbReference type="ChEBI" id="CHEBI:15378"/>
        <dbReference type="ChEBI" id="CHEBI:15801"/>
        <dbReference type="ChEBI" id="CHEBI:16810"/>
        <dbReference type="ChEBI" id="CHEBI:57540"/>
        <dbReference type="ChEBI" id="CHEBI:57945"/>
        <dbReference type="EC" id="1.1.1.399"/>
    </reaction>
</comment>
<comment type="catalytic activity">
    <reaction evidence="3">
        <text>(S)-malate + NAD(+) = oxaloacetate + NADH + H(+)</text>
        <dbReference type="Rhea" id="RHEA:21432"/>
        <dbReference type="ChEBI" id="CHEBI:15378"/>
        <dbReference type="ChEBI" id="CHEBI:15589"/>
        <dbReference type="ChEBI" id="CHEBI:16452"/>
        <dbReference type="ChEBI" id="CHEBI:57540"/>
        <dbReference type="ChEBI" id="CHEBI:57945"/>
        <dbReference type="EC" id="1.1.1.37"/>
    </reaction>
</comment>
<comment type="pathway">
    <text>Amino-acid biosynthesis; L-serine biosynthesis; L-serine from 3-phospho-D-glycerate: step 1/3.</text>
</comment>
<comment type="subunit">
    <text evidence="2">Homotetramer.</text>
</comment>
<comment type="similarity">
    <text evidence="5">Belongs to the D-isomer specific 2-hydroxyacid dehydrogenase family.</text>
</comment>
<reference key="1">
    <citation type="journal article" date="2007" name="Gene">
        <title>Mapping of chimpanzee full-length cDNAs onto the human genome unveils large potential divergence of the transcriptome.</title>
        <authorList>
            <person name="Sakate R."/>
            <person name="Suto Y."/>
            <person name="Imanishi T."/>
            <person name="Tanoue T."/>
            <person name="Hida M."/>
            <person name="Hayasaka I."/>
            <person name="Kusuda J."/>
            <person name="Gojobori T."/>
            <person name="Hashimoto K."/>
            <person name="Hirai M."/>
        </authorList>
    </citation>
    <scope>NUCLEOTIDE SEQUENCE [MRNA]</scope>
    <source>
        <tissue>Cerebellum</tissue>
    </source>
</reference>
<sequence length="533" mass="56663">MAFANLRKVLISDSLDPCCRKILQDGGLQVVEKQNLSKEELIAELQDCEGLIVRSATKVTADVINAAEKLQVVGRAGTGVDNVDLEAATRKGILVMNTPNGNSLSAAELTCGMIMCLARQIPQATASMKDGKWERKKFMGTELNGKTLGILGLGRIGREVATRMQSFGMKTIGYDPIISPEVSASFGVQQLPLEEIWPLCDFITVHTPLLPSTTGLLNDNTFAQCKKGVRVVNCARGGIVDEGALLRALQSGQCAGAALDVFTEEPPRDRALVDHENVISCPHLGASTKEAQSRCGEEIAVQFVDMVKGKSLTGVVNAQALTSAFSPHTKPWIGLAEALGTLMRAWAGSPKGTIQVITQGTSLKNAGNCLSPAVIVGLLKEASKQADVNLVNAKLLVKEAGLNVTTSHSPAAPGEQGFGECLLAVALAGAPYQAVGLVQGTTPVLQGLNGAVFRPEVPLRRDLPLLLFRTQTSDPAMPPTMMGLLAEAGVRLLSYQTSLVSDGETWHVMGIPSLLPSLEAWKQHVTEAFQFHF</sequence>
<keyword id="KW-0007">Acetylation</keyword>
<keyword id="KW-0028">Amino-acid biosynthesis</keyword>
<keyword id="KW-1017">Isopeptide bond</keyword>
<keyword id="KW-0520">NAD</keyword>
<keyword id="KW-0560">Oxidoreductase</keyword>
<keyword id="KW-0597">Phosphoprotein</keyword>
<keyword id="KW-1185">Reference proteome</keyword>
<keyword id="KW-0718">Serine biosynthesis</keyword>
<keyword id="KW-0832">Ubl conjugation</keyword>
<name>SERA_PANTR</name>
<feature type="initiator methionine" description="Removed" evidence="3">
    <location>
        <position position="1"/>
    </location>
</feature>
<feature type="chain" id="PRO_0000297547" description="D-3-phosphoglycerate dehydrogenase">
    <location>
        <begin position="2"/>
        <end position="533"/>
    </location>
</feature>
<feature type="active site" evidence="1">
    <location>
        <position position="236"/>
    </location>
</feature>
<feature type="active site" evidence="1">
    <location>
        <position position="265"/>
    </location>
</feature>
<feature type="active site" description="Proton donor" evidence="1">
    <location>
        <position position="283"/>
    </location>
</feature>
<feature type="binding site" evidence="3">
    <location>
        <position position="78"/>
    </location>
    <ligand>
        <name>NAD(+)</name>
        <dbReference type="ChEBI" id="CHEBI:57540"/>
    </ligand>
</feature>
<feature type="binding site" evidence="3">
    <location>
        <begin position="155"/>
        <end position="156"/>
    </location>
    <ligand>
        <name>NAD(+)</name>
        <dbReference type="ChEBI" id="CHEBI:57540"/>
    </ligand>
</feature>
<feature type="binding site" evidence="3">
    <location>
        <position position="175"/>
    </location>
    <ligand>
        <name>NAD(+)</name>
        <dbReference type="ChEBI" id="CHEBI:57540"/>
    </ligand>
</feature>
<feature type="binding site" evidence="3">
    <location>
        <position position="207"/>
    </location>
    <ligand>
        <name>NAD(+)</name>
        <dbReference type="ChEBI" id="CHEBI:57540"/>
    </ligand>
</feature>
<feature type="binding site" evidence="3">
    <location>
        <begin position="234"/>
        <end position="236"/>
    </location>
    <ligand>
        <name>NAD(+)</name>
        <dbReference type="ChEBI" id="CHEBI:57540"/>
    </ligand>
</feature>
<feature type="binding site" evidence="3">
    <location>
        <position position="260"/>
    </location>
    <ligand>
        <name>NAD(+)</name>
        <dbReference type="ChEBI" id="CHEBI:57540"/>
    </ligand>
</feature>
<feature type="binding site" evidence="3">
    <location>
        <begin position="283"/>
        <end position="286"/>
    </location>
    <ligand>
        <name>NAD(+)</name>
        <dbReference type="ChEBI" id="CHEBI:57540"/>
    </ligand>
</feature>
<feature type="modified residue" description="N-acetylalanine" evidence="3">
    <location>
        <position position="2"/>
    </location>
</feature>
<feature type="modified residue" description="Phosphoserine" evidence="3">
    <location>
        <position position="14"/>
    </location>
</feature>
<feature type="modified residue" description="N6-acetyllysine; alternate" evidence="4">
    <location>
        <position position="21"/>
    </location>
</feature>
<feature type="modified residue" description="N6-acetyllysine" evidence="4">
    <location>
        <position position="58"/>
    </location>
</feature>
<feature type="modified residue" description="Phosphothreonine" evidence="3">
    <location>
        <position position="78"/>
    </location>
</feature>
<feature type="cross-link" description="Glycyl lysine isopeptide (Lys-Gly) (interchain with G-Cter in SUMO1); alternate" evidence="3">
    <location>
        <position position="21"/>
    </location>
</feature>
<feature type="cross-link" description="Glycyl lysine isopeptide (Lys-Gly) (interchain with G-Cter in SUMO2); alternate" evidence="3">
    <location>
        <position position="21"/>
    </location>
</feature>
<evidence type="ECO:0000250" key="1"/>
<evidence type="ECO:0000250" key="2">
    <source>
        <dbReference type="UniProtKB" id="O08651"/>
    </source>
</evidence>
<evidence type="ECO:0000250" key="3">
    <source>
        <dbReference type="UniProtKB" id="O43175"/>
    </source>
</evidence>
<evidence type="ECO:0000250" key="4">
    <source>
        <dbReference type="UniProtKB" id="Q61753"/>
    </source>
</evidence>
<evidence type="ECO:0000305" key="5"/>
<gene>
    <name type="primary">PHGDH</name>
</gene>
<protein>
    <recommendedName>
        <fullName>D-3-phosphoglycerate dehydrogenase</fullName>
        <shortName>3-PGDH</shortName>
        <ecNumber evidence="3">1.1.1.95</ecNumber>
    </recommendedName>
    <alternativeName>
        <fullName evidence="5">2-oxoglutarate reductase</fullName>
        <ecNumber evidence="3">1.1.1.399</ecNumber>
    </alternativeName>
    <alternativeName>
        <fullName evidence="5">Malate dehydrogenase</fullName>
        <ecNumber evidence="3">1.1.1.37</ecNumber>
    </alternativeName>
</protein>
<proteinExistence type="evidence at transcript level"/>